<evidence type="ECO:0000269" key="1">
    <source>
    </source>
</evidence>
<evidence type="ECO:0000269" key="2">
    <source>
    </source>
</evidence>
<evidence type="ECO:0000305" key="3"/>
<evidence type="ECO:0000312" key="4">
    <source>
        <dbReference type="EMBL" id="AAD31690.1"/>
    </source>
</evidence>
<evidence type="ECO:0000312" key="5">
    <source>
        <dbReference type="EMBL" id="ABC86472.1"/>
    </source>
</evidence>
<evidence type="ECO:0000312" key="6">
    <source>
        <dbReference type="FlyBase" id="FBgn0026778"/>
    </source>
</evidence>
<evidence type="ECO:0000312" key="7">
    <source>
        <dbReference type="Proteomes" id="UP000000803"/>
    </source>
</evidence>
<dbReference type="EMBL" id="AF124501">
    <property type="protein sequence ID" value="AAD31690.1"/>
    <property type="molecule type" value="mRNA"/>
</dbReference>
<dbReference type="EMBL" id="AE014134">
    <property type="protein sequence ID" value="AAF51241.2"/>
    <property type="molecule type" value="Genomic_DNA"/>
</dbReference>
<dbReference type="EMBL" id="BT024410">
    <property type="protein sequence ID" value="ABC86472.1"/>
    <property type="molecule type" value="mRNA"/>
</dbReference>
<dbReference type="RefSeq" id="NP_477440.1">
    <property type="nucleotide sequence ID" value="NM_058092.4"/>
</dbReference>
<dbReference type="SMR" id="Q9VQD4"/>
<dbReference type="FunCoup" id="Q9VQD4">
    <property type="interactions" value="1730"/>
</dbReference>
<dbReference type="IntAct" id="Q9VQD4">
    <property type="interactions" value="5"/>
</dbReference>
<dbReference type="STRING" id="7227.FBpp0077427"/>
<dbReference type="PaxDb" id="7227-FBpp0077427"/>
<dbReference type="EnsemblMetazoa" id="FBtr0077747">
    <property type="protein sequence ID" value="FBpp0077427"/>
    <property type="gene ID" value="FBgn0026778"/>
</dbReference>
<dbReference type="GeneID" id="33440"/>
<dbReference type="KEGG" id="dme:Dmel_CG3240"/>
<dbReference type="UCSC" id="CG3240-RA">
    <property type="organism name" value="d. melanogaster"/>
</dbReference>
<dbReference type="AGR" id="FB:FBgn0026778"/>
<dbReference type="CTD" id="5810"/>
<dbReference type="FlyBase" id="FBgn0026778">
    <property type="gene designation" value="Rad1"/>
</dbReference>
<dbReference type="VEuPathDB" id="VectorBase:FBgn0026778"/>
<dbReference type="eggNOG" id="KOG3194">
    <property type="taxonomic scope" value="Eukaryota"/>
</dbReference>
<dbReference type="GeneTree" id="ENSGT00500000044913"/>
<dbReference type="HOGENOM" id="CLU_035332_2_0_1"/>
<dbReference type="InParanoid" id="Q9VQD4"/>
<dbReference type="OMA" id="WSQAYKF"/>
<dbReference type="OrthoDB" id="337581at2759"/>
<dbReference type="Reactome" id="R-DME-176187">
    <property type="pathway name" value="Activation of ATR in response to replication stress"/>
</dbReference>
<dbReference type="Reactome" id="R-DME-5693607">
    <property type="pathway name" value="Processing of DNA double-strand break ends"/>
</dbReference>
<dbReference type="Reactome" id="R-DME-6804756">
    <property type="pathway name" value="Regulation of TP53 Activity through Phosphorylation"/>
</dbReference>
<dbReference type="Reactome" id="R-DME-69473">
    <property type="pathway name" value="G2/M DNA damage checkpoint"/>
</dbReference>
<dbReference type="BioGRID-ORCS" id="33440">
    <property type="hits" value="0 hits in 1 CRISPR screen"/>
</dbReference>
<dbReference type="Proteomes" id="UP000000803">
    <property type="component" value="Chromosome 2L"/>
</dbReference>
<dbReference type="Bgee" id="FBgn0026778">
    <property type="expression patterns" value="Expressed in ovary and 4 other cell types or tissues"/>
</dbReference>
<dbReference type="GO" id="GO:0030896">
    <property type="term" value="C:checkpoint clamp complex"/>
    <property type="evidence" value="ECO:0000314"/>
    <property type="project" value="FlyBase"/>
</dbReference>
<dbReference type="GO" id="GO:0000077">
    <property type="term" value="P:DNA damage checkpoint signaling"/>
    <property type="evidence" value="ECO:0000318"/>
    <property type="project" value="GO_Central"/>
</dbReference>
<dbReference type="GO" id="GO:0006281">
    <property type="term" value="P:DNA repair"/>
    <property type="evidence" value="ECO:0000318"/>
    <property type="project" value="GO_Central"/>
</dbReference>
<dbReference type="CDD" id="cd00577">
    <property type="entry name" value="PCNA"/>
    <property type="match status" value="1"/>
</dbReference>
<dbReference type="FunFam" id="3.70.10.10:FF:000052">
    <property type="entry name" value="DNA repair protein Rad1"/>
    <property type="match status" value="1"/>
</dbReference>
<dbReference type="Gene3D" id="3.70.10.10">
    <property type="match status" value="1"/>
</dbReference>
<dbReference type="InterPro" id="IPR003011">
    <property type="entry name" value="Cell_cycle_checkpoint_Rad1"/>
</dbReference>
<dbReference type="InterPro" id="IPR046938">
    <property type="entry name" value="DNA_clamp_sf"/>
</dbReference>
<dbReference type="InterPro" id="IPR003021">
    <property type="entry name" value="Rad1_Rec1_Rad17"/>
</dbReference>
<dbReference type="PANTHER" id="PTHR10870">
    <property type="entry name" value="CELL CYCLE CHECKPOINT PROTEIN RAD1"/>
    <property type="match status" value="1"/>
</dbReference>
<dbReference type="PANTHER" id="PTHR10870:SF0">
    <property type="entry name" value="CELL CYCLE CHECKPOINT PROTEIN RAD1"/>
    <property type="match status" value="1"/>
</dbReference>
<dbReference type="Pfam" id="PF02144">
    <property type="entry name" value="Rad1"/>
    <property type="match status" value="1"/>
</dbReference>
<dbReference type="PRINTS" id="PR01245">
    <property type="entry name" value="RAD1REC1"/>
</dbReference>
<dbReference type="PRINTS" id="PR01246">
    <property type="entry name" value="RAD1REPAIR"/>
</dbReference>
<dbReference type="SUPFAM" id="SSF55979">
    <property type="entry name" value="DNA clamp"/>
    <property type="match status" value="1"/>
</dbReference>
<organism evidence="7">
    <name type="scientific">Drosophila melanogaster</name>
    <name type="common">Fruit fly</name>
    <dbReference type="NCBI Taxonomy" id="7227"/>
    <lineage>
        <taxon>Eukaryota</taxon>
        <taxon>Metazoa</taxon>
        <taxon>Ecdysozoa</taxon>
        <taxon>Arthropoda</taxon>
        <taxon>Hexapoda</taxon>
        <taxon>Insecta</taxon>
        <taxon>Pterygota</taxon>
        <taxon>Neoptera</taxon>
        <taxon>Endopterygota</taxon>
        <taxon>Diptera</taxon>
        <taxon>Brachycera</taxon>
        <taxon>Muscomorpha</taxon>
        <taxon>Ephydroidea</taxon>
        <taxon>Drosophilidae</taxon>
        <taxon>Drosophila</taxon>
        <taxon>Sophophora</taxon>
    </lineage>
</organism>
<proteinExistence type="evidence at protein level"/>
<gene>
    <name evidence="6" type="primary">Rad1</name>
    <name evidence="6" type="ORF">CG3240</name>
</gene>
<accession>Q9VQD4</accession>
<accession>Q9XYT3</accession>
<feature type="chain" id="PRO_0000462467" description="DNA repair protein Rad1">
    <location>
        <begin position="1"/>
        <end position="274"/>
    </location>
</feature>
<comment type="subunit">
    <text evidence="1 2">Component of the 9-1-1 checkpoint clamp complex consisting of Rad9 isoform A, Rad1 and Hus1-like; the interaction with Hus1-like is direct (PubMed:17327271, PubMed:22666434). Does not interact directly with Rad9; this interaction is probably mediated by Hus1-like (PubMed:17327271). This complex probably also forms with Rad9 isoform B, however 9-1-1 complex containing Rad9 isoform A localizes to the nuclear periphery (PubMed:22666434).</text>
</comment>
<comment type="subcellular location">
    <subcellularLocation>
        <location evidence="2">Cytoplasm</location>
    </subcellularLocation>
    <subcellularLocation>
        <location evidence="2">Nucleus</location>
    </subcellularLocation>
    <subcellularLocation>
        <location evidence="2">Nucleus envelope</location>
    </subcellularLocation>
    <text evidence="2">Localizes to the nuclear periphery when part of the 9-1-1 complex with Rad9 isoform A and Rad1.</text>
</comment>
<comment type="tissue specificity">
    <text evidence="1">Expressed in ovary.</text>
</comment>
<comment type="similarity">
    <text evidence="3">Belongs to the rad1 family.</text>
</comment>
<protein>
    <recommendedName>
        <fullName evidence="3">DNA repair protein Rad1</fullName>
    </recommendedName>
    <alternativeName>
        <fullName evidence="6">Protein radiation insensitive 1</fullName>
    </alternativeName>
</protein>
<reference evidence="4" key="1">
    <citation type="submission" date="1999-01" db="EMBL/GenBank/DDBJ databases">
        <title>Drosophila DNA damage checkpoint homologs.</title>
        <authorList>
            <person name="Brodsky M.H."/>
            <person name="Tsang G."/>
            <person name="Thelen M.P."/>
            <person name="Rubin G.M."/>
        </authorList>
    </citation>
    <scope>NUCLEOTIDE SEQUENCE [MRNA]</scope>
</reference>
<reference evidence="7" key="2">
    <citation type="journal article" date="2000" name="Science">
        <title>The genome sequence of Drosophila melanogaster.</title>
        <authorList>
            <person name="Adams M.D."/>
            <person name="Celniker S.E."/>
            <person name="Holt R.A."/>
            <person name="Evans C.A."/>
            <person name="Gocayne J.D."/>
            <person name="Amanatides P.G."/>
            <person name="Scherer S.E."/>
            <person name="Li P.W."/>
            <person name="Hoskins R.A."/>
            <person name="Galle R.F."/>
            <person name="George R.A."/>
            <person name="Lewis S.E."/>
            <person name="Richards S."/>
            <person name="Ashburner M."/>
            <person name="Henderson S.N."/>
            <person name="Sutton G.G."/>
            <person name="Wortman J.R."/>
            <person name="Yandell M.D."/>
            <person name="Zhang Q."/>
            <person name="Chen L.X."/>
            <person name="Brandon R.C."/>
            <person name="Rogers Y.-H.C."/>
            <person name="Blazej R.G."/>
            <person name="Champe M."/>
            <person name="Pfeiffer B.D."/>
            <person name="Wan K.H."/>
            <person name="Doyle C."/>
            <person name="Baxter E.G."/>
            <person name="Helt G."/>
            <person name="Nelson C.R."/>
            <person name="Miklos G.L.G."/>
            <person name="Abril J.F."/>
            <person name="Agbayani A."/>
            <person name="An H.-J."/>
            <person name="Andrews-Pfannkoch C."/>
            <person name="Baldwin D."/>
            <person name="Ballew R.M."/>
            <person name="Basu A."/>
            <person name="Baxendale J."/>
            <person name="Bayraktaroglu L."/>
            <person name="Beasley E.M."/>
            <person name="Beeson K.Y."/>
            <person name="Benos P.V."/>
            <person name="Berman B.P."/>
            <person name="Bhandari D."/>
            <person name="Bolshakov S."/>
            <person name="Borkova D."/>
            <person name="Botchan M.R."/>
            <person name="Bouck J."/>
            <person name="Brokstein P."/>
            <person name="Brottier P."/>
            <person name="Burtis K.C."/>
            <person name="Busam D.A."/>
            <person name="Butler H."/>
            <person name="Cadieu E."/>
            <person name="Center A."/>
            <person name="Chandra I."/>
            <person name="Cherry J.M."/>
            <person name="Cawley S."/>
            <person name="Dahlke C."/>
            <person name="Davenport L.B."/>
            <person name="Davies P."/>
            <person name="de Pablos B."/>
            <person name="Delcher A."/>
            <person name="Deng Z."/>
            <person name="Mays A.D."/>
            <person name="Dew I."/>
            <person name="Dietz S.M."/>
            <person name="Dodson K."/>
            <person name="Doup L.E."/>
            <person name="Downes M."/>
            <person name="Dugan-Rocha S."/>
            <person name="Dunkov B.C."/>
            <person name="Dunn P."/>
            <person name="Durbin K.J."/>
            <person name="Evangelista C.C."/>
            <person name="Ferraz C."/>
            <person name="Ferriera S."/>
            <person name="Fleischmann W."/>
            <person name="Fosler C."/>
            <person name="Gabrielian A.E."/>
            <person name="Garg N.S."/>
            <person name="Gelbart W.M."/>
            <person name="Glasser K."/>
            <person name="Glodek A."/>
            <person name="Gong F."/>
            <person name="Gorrell J.H."/>
            <person name="Gu Z."/>
            <person name="Guan P."/>
            <person name="Harris M."/>
            <person name="Harris N.L."/>
            <person name="Harvey D.A."/>
            <person name="Heiman T.J."/>
            <person name="Hernandez J.R."/>
            <person name="Houck J."/>
            <person name="Hostin D."/>
            <person name="Houston K.A."/>
            <person name="Howland T.J."/>
            <person name="Wei M.-H."/>
            <person name="Ibegwam C."/>
            <person name="Jalali M."/>
            <person name="Kalush F."/>
            <person name="Karpen G.H."/>
            <person name="Ke Z."/>
            <person name="Kennison J.A."/>
            <person name="Ketchum K.A."/>
            <person name="Kimmel B.E."/>
            <person name="Kodira C.D."/>
            <person name="Kraft C.L."/>
            <person name="Kravitz S."/>
            <person name="Kulp D."/>
            <person name="Lai Z."/>
            <person name="Lasko P."/>
            <person name="Lei Y."/>
            <person name="Levitsky A.A."/>
            <person name="Li J.H."/>
            <person name="Li Z."/>
            <person name="Liang Y."/>
            <person name="Lin X."/>
            <person name="Liu X."/>
            <person name="Mattei B."/>
            <person name="McIntosh T.C."/>
            <person name="McLeod M.P."/>
            <person name="McPherson D."/>
            <person name="Merkulov G."/>
            <person name="Milshina N.V."/>
            <person name="Mobarry C."/>
            <person name="Morris J."/>
            <person name="Moshrefi A."/>
            <person name="Mount S.M."/>
            <person name="Moy M."/>
            <person name="Murphy B."/>
            <person name="Murphy L."/>
            <person name="Muzny D.M."/>
            <person name="Nelson D.L."/>
            <person name="Nelson D.R."/>
            <person name="Nelson K.A."/>
            <person name="Nixon K."/>
            <person name="Nusskern D.R."/>
            <person name="Pacleb J.M."/>
            <person name="Palazzolo M."/>
            <person name="Pittman G.S."/>
            <person name="Pan S."/>
            <person name="Pollard J."/>
            <person name="Puri V."/>
            <person name="Reese M.G."/>
            <person name="Reinert K."/>
            <person name="Remington K."/>
            <person name="Saunders R.D.C."/>
            <person name="Scheeler F."/>
            <person name="Shen H."/>
            <person name="Shue B.C."/>
            <person name="Siden-Kiamos I."/>
            <person name="Simpson M."/>
            <person name="Skupski M.P."/>
            <person name="Smith T.J."/>
            <person name="Spier E."/>
            <person name="Spradling A.C."/>
            <person name="Stapleton M."/>
            <person name="Strong R."/>
            <person name="Sun E."/>
            <person name="Svirskas R."/>
            <person name="Tector C."/>
            <person name="Turner R."/>
            <person name="Venter E."/>
            <person name="Wang A.H."/>
            <person name="Wang X."/>
            <person name="Wang Z.-Y."/>
            <person name="Wassarman D.A."/>
            <person name="Weinstock G.M."/>
            <person name="Weissenbach J."/>
            <person name="Williams S.M."/>
            <person name="Woodage T."/>
            <person name="Worley K.C."/>
            <person name="Wu D."/>
            <person name="Yang S."/>
            <person name="Yao Q.A."/>
            <person name="Ye J."/>
            <person name="Yeh R.-F."/>
            <person name="Zaveri J.S."/>
            <person name="Zhan M."/>
            <person name="Zhang G."/>
            <person name="Zhao Q."/>
            <person name="Zheng L."/>
            <person name="Zheng X.H."/>
            <person name="Zhong F.N."/>
            <person name="Zhong W."/>
            <person name="Zhou X."/>
            <person name="Zhu S.C."/>
            <person name="Zhu X."/>
            <person name="Smith H.O."/>
            <person name="Gibbs R.A."/>
            <person name="Myers E.W."/>
            <person name="Rubin G.M."/>
            <person name="Venter J.C."/>
        </authorList>
    </citation>
    <scope>NUCLEOTIDE SEQUENCE [LARGE SCALE GENOMIC DNA]</scope>
    <source>
        <strain evidence="7">Berkeley</strain>
    </source>
</reference>
<reference evidence="7" key="3">
    <citation type="journal article" date="2002" name="Genome Biol.">
        <title>Annotation of the Drosophila melanogaster euchromatic genome: a systematic review.</title>
        <authorList>
            <person name="Misra S."/>
            <person name="Crosby M.A."/>
            <person name="Mungall C.J."/>
            <person name="Matthews B.B."/>
            <person name="Campbell K.S."/>
            <person name="Hradecky P."/>
            <person name="Huang Y."/>
            <person name="Kaminker J.S."/>
            <person name="Millburn G.H."/>
            <person name="Prochnik S.E."/>
            <person name="Smith C.D."/>
            <person name="Tupy J.L."/>
            <person name="Whitfield E.J."/>
            <person name="Bayraktaroglu L."/>
            <person name="Berman B.P."/>
            <person name="Bettencourt B.R."/>
            <person name="Celniker S.E."/>
            <person name="de Grey A.D.N.J."/>
            <person name="Drysdale R.A."/>
            <person name="Harris N.L."/>
            <person name="Richter J."/>
            <person name="Russo S."/>
            <person name="Schroeder A.J."/>
            <person name="Shu S.Q."/>
            <person name="Stapleton M."/>
            <person name="Yamada C."/>
            <person name="Ashburner M."/>
            <person name="Gelbart W.M."/>
            <person name="Rubin G.M."/>
            <person name="Lewis S.E."/>
        </authorList>
    </citation>
    <scope>GENOME REANNOTATION</scope>
    <source>
        <strain evidence="7">Berkeley</strain>
    </source>
</reference>
<reference evidence="5" key="4">
    <citation type="submission" date="2013-04" db="EMBL/GenBank/DDBJ databases">
        <authorList>
            <person name="Carlson J."/>
            <person name="Booth B."/>
            <person name="Frise E."/>
            <person name="Park S."/>
            <person name="Wan K."/>
            <person name="Yu C."/>
            <person name="Celniker S."/>
        </authorList>
    </citation>
    <scope>NUCLEOTIDE SEQUENCE [LARGE SCALE MRNA]</scope>
</reference>
<reference evidence="3" key="5">
    <citation type="journal article" date="2007" name="J. Cell Sci.">
        <title>An essential role for Drosophila hus1 in somatic and meiotic DNA damage responses.</title>
        <authorList>
            <person name="Abdu U."/>
            <person name="Klovstad M."/>
            <person name="Butin-Israeli V."/>
            <person name="Bakhrat A."/>
            <person name="Schuepbach T."/>
        </authorList>
    </citation>
    <scope>INTERACTION WITH HUS1-LIKE</scope>
    <scope>TISSUE SPECIFICITY</scope>
</reference>
<reference evidence="3" key="6">
    <citation type="journal article" date="2012" name="PLoS ONE">
        <title>Localization of the Drosophila Rad9 protein to the nuclear membrane is regulated by the C-terminal region and is affected in the meiotic checkpoint.</title>
        <authorList>
            <person name="Kadir R."/>
            <person name="Bakhrat A."/>
            <person name="Tokarsky R."/>
            <person name="Abdu U."/>
        </authorList>
    </citation>
    <scope>INTERACTION WITH RAD9</scope>
    <scope>SUBCELLULAR LOCATION</scope>
</reference>
<name>RAD1_DROME</name>
<keyword id="KW-0963">Cytoplasm</keyword>
<keyword id="KW-0227">DNA damage</keyword>
<keyword id="KW-0234">DNA repair</keyword>
<keyword id="KW-0539">Nucleus</keyword>
<keyword id="KW-1185">Reference proteome</keyword>
<sequence length="274" mass="31075">MTDVEPSPYGDCKFVARVEHIKTFIQAIKSICFNDYGMVQVSEDGLRITVEQGKSIQATLFMPPGAFMEFRVQDFQCFGVKMNVLSECLSLFGSADCSLRMMYRDKGDPLKIILYPHDDDDVSTECAIKTMDCDEPIDYDQNLKDPDLNVIFVRGPNLSKVFNELEKSAEEFEFVTSPNRPHFKITTVGIMQAVFSVEVAKTSPMMMMFNCKQTVVARYKSQQIRMTNKAMQSATKVAIKTNSVGLLELHLVMQGDSQEEIFIQFFIIPLLNTD</sequence>